<feature type="initiator methionine" description="Removed" evidence="15 18">
    <location>
        <position position="1"/>
    </location>
</feature>
<feature type="chain" id="PRO_0000305237" description="Ran-binding protein 10">
    <location>
        <begin position="2"/>
        <end position="620"/>
    </location>
</feature>
<feature type="domain" description="B30.2/SPRY" evidence="5">
    <location>
        <begin position="35"/>
        <end position="222"/>
    </location>
</feature>
<feature type="domain" description="LisH" evidence="4">
    <location>
        <begin position="253"/>
        <end position="285"/>
    </location>
</feature>
<feature type="domain" description="CTLH" evidence="3">
    <location>
        <begin position="291"/>
        <end position="348"/>
    </location>
</feature>
<feature type="region of interest" description="Disordered" evidence="6">
    <location>
        <begin position="1"/>
        <end position="41"/>
    </location>
</feature>
<feature type="region of interest" description="Disordered" evidence="6">
    <location>
        <begin position="347"/>
        <end position="458"/>
    </location>
</feature>
<feature type="compositionally biased region" description="Gly residues" evidence="6">
    <location>
        <begin position="18"/>
        <end position="28"/>
    </location>
</feature>
<feature type="compositionally biased region" description="Polar residues" evidence="6">
    <location>
        <begin position="347"/>
        <end position="398"/>
    </location>
</feature>
<feature type="compositionally biased region" description="Low complexity" evidence="6">
    <location>
        <begin position="409"/>
        <end position="436"/>
    </location>
</feature>
<feature type="modified residue" description="N-acetylalanine" evidence="15 18">
    <location>
        <position position="2"/>
    </location>
</feature>
<feature type="modified residue" description="Phosphoserine" evidence="19">
    <location>
        <position position="361"/>
    </location>
</feature>
<feature type="modified residue" description="Phosphotyrosine" evidence="2">
    <location>
        <position position="362"/>
    </location>
</feature>
<feature type="modified residue" description="Phosphoserine" evidence="14 16 19">
    <location>
        <position position="365"/>
    </location>
</feature>
<feature type="modified residue" description="Phosphoserine" evidence="2">
    <location>
        <position position="367"/>
    </location>
</feature>
<feature type="modified residue" description="Phosphoserine" evidence="14 16 17 19 20">
    <location>
        <position position="369"/>
    </location>
</feature>
<feature type="modified residue" description="Phosphoserine" evidence="19">
    <location>
        <position position="422"/>
    </location>
</feature>
<feature type="modified residue" description="Phosphoserine" evidence="2">
    <location>
        <position position="451"/>
    </location>
</feature>
<feature type="modified residue" description="Phosphoserine" evidence="2">
    <location>
        <position position="453"/>
    </location>
</feature>
<feature type="splice variant" id="VSP_055839" description="In isoform 2." evidence="12">
    <location>
        <begin position="1"/>
        <end position="117"/>
    </location>
</feature>
<feature type="splice variant" id="VSP_055840" description="In isoform 3." evidence="12">
    <location>
        <begin position="134"/>
        <end position="189"/>
    </location>
</feature>
<feature type="splice variant" id="VSP_055841" description="In isoform 2 and isoform 3." evidence="12">
    <original>T</original>
    <variation>TSNPWLQLERRPNQAAPTTPPGPTPTSTPPH</variation>
    <location>
        <position position="450"/>
    </location>
</feature>
<feature type="sequence conflict" description="In Ref. 5; AAH99917." evidence="13" ref="5">
    <original>L</original>
    <variation>P</variation>
    <location>
        <position position="223"/>
    </location>
</feature>
<feature type="sequence conflict" description="In Ref. 5; AAH99917." evidence="13" ref="5">
    <original>M</original>
    <variation>V</variation>
    <location>
        <position position="455"/>
    </location>
</feature>
<proteinExistence type="evidence at protein level"/>
<sequence>MAAATADPGAGNPQPGDSSGGGAGGGLPSPGEQELSRRLQRLYPAVNQQETPLPRSWSPKDKYNYIGLSQGNLRVHYKGHGKNHKDAASVRATHPIPAACGIYYFEVKIVSKGRDGYMGIGLSAQGVNMNRLPGWDKHSYGYHGDDGHSFCSSGTGQPYGPTFTTGDVIGCCVNLINGTCFYTKNGHSLGIAFTDLPANLYPTVGLQTPGEIVDANFGQQPFLFDIEDYMREWRAKVQGTVHCFPISARLGEWQAVLQNMVSSYLVHHGYCATATAFARMTETPIQEEQASIKNRQKIQKLVLEGRVGEAIETTQRFYPGLLEHNPNLLFMLKCRQFVEMVNGTDSEVRSLSSRSPKSQDSYPGSPSLSPRHGPSSSHMHNTGADSPSCSNGVASTKSKQNHSKYPAPSSSSSSSSSSSSSSPSSVNYSESNSTDSTKSQHHSSTSNQETSDSEMEMEAEHYPNGVLGSMSTRIVNGAYKHEDLQTDESSMDDRHPRRQLCGGNQAATERIILFGRELQALSEQLGREYGKNLAHTEMLQDAFSLLAYSDPWSCPVGQQLDPIQREPVCAALNSAILESQNLPKQPPLMLALGQASECLRLMARAGLGSCSFARVDDYLH</sequence>
<name>RBP10_HUMAN</name>
<comment type="function">
    <text evidence="2 8 11 13">May act as an adapter protein to couple membrane receptors to intracellular signaling pathways (Probable). Core component of the CTLH E3 ubiquitin-protein ligase complex that selectively accepts ubiquitin from UBE2H and mediates ubiquitination and subsequent proteasomal degradation of the transcription factor HBP1 (PubMed:29911972). Enhances dihydrotestosterone-induced transactivation activity of AR, as well as dexamethasone-induced transactivation activity of NR3C1, but does not affect estrogen-induced transactivation (PubMed:18222118). Acts as a guanine nucleotide exchange factor (GEF) for RAN GTPase. May play an essential role in hemostasis and in maintaining microtubule dynamics with respect to both platelet shape and function (By similarity).</text>
</comment>
<comment type="subunit">
    <text evidence="2 7 8 9 10 11">May form homodimers (PubMed:18222118). Identified in the CTLH complex that contains GID4, RANBP9 and/or RANBP10, MKLN1, MAEA, RMND5A (or alternatively its paralog RMND5B), GID8, ARMC8, WDR26 and YPEL5 (PubMed:29911972). Within this complex, MAEA, RMND5A (or alternatively its paralog RMND5B), GID8, WDR26, and RANBP9 and/or RANBP10 form the catalytic core, while GID4, MKLN1, ARMC8 and YPEL5 have ancillary roles (PubMed:29911972). Interacts with RAN and RANBP9 (PubMed:14684163, PubMed:18222118). Interacts with the HGF receptor MET (PubMed:14684163). Interacts with AR (PubMed:18222118). Interacts with TUBB1 (PubMed:18347012). Interacts with YPEL5 (PubMed:20580816). May interact with TUBB5 (By similarity). Interacts with DDX4 (By similarity).</text>
</comment>
<comment type="interaction">
    <interactant intactId="EBI-310569">
        <id>Q6VN20</id>
    </interactant>
    <interactant intactId="EBI-1188472">
        <id>P78358</id>
        <label>CTAG1B</label>
    </interactant>
    <organismsDiffer>false</organismsDiffer>
    <experiments>3</experiments>
</comment>
<comment type="interaction">
    <interactant intactId="EBI-310569">
        <id>Q6VN20</id>
    </interactant>
    <interactant intactId="EBI-947015">
        <id>P24592</id>
        <label>IGFBP6</label>
    </interactant>
    <organismsDiffer>false</organismsDiffer>
    <experiments>3</experiments>
</comment>
<comment type="interaction">
    <interactant intactId="EBI-310569">
        <id>Q6VN20</id>
    </interactant>
    <interactant intactId="EBI-739552">
        <id>P43364</id>
        <label>MAGEA11</label>
    </interactant>
    <organismsDiffer>false</organismsDiffer>
    <experiments>3</experiments>
</comment>
<comment type="subcellular location">
    <subcellularLocation>
        <location evidence="8">Cytoplasm</location>
        <location evidence="8">Cytosol</location>
    </subcellularLocation>
    <subcellularLocation>
        <location evidence="8">Nucleus</location>
    </subcellularLocation>
    <text>Predominantly cytoplasmic.</text>
</comment>
<comment type="alternative products">
    <event type="alternative splicing"/>
    <isoform>
        <id>Q6VN20-1</id>
        <name>1</name>
        <sequence type="displayed"/>
    </isoform>
    <isoform>
        <id>Q6VN20-2</id>
        <name>2</name>
        <sequence type="described" ref="VSP_055839 VSP_055841"/>
    </isoform>
    <isoform>
        <id>Q6VN20-3</id>
        <name>3</name>
        <sequence type="described" ref="VSP_055840 VSP_055841"/>
    </isoform>
</comment>
<comment type="tissue specificity">
    <text evidence="7">Broadly expressed, with highest levels in skeletal muscle.</text>
</comment>
<comment type="domain">
    <text evidence="1">The SPRY domain mediates the interaction with MET.</text>
</comment>
<comment type="similarity">
    <text evidence="13">Belongs to the RANBP9/10 family.</text>
</comment>
<comment type="sequence caution" evidence="13">
    <conflict type="erroneous initiation">
        <sequence resource="EMBL-CDS" id="BAA95988"/>
    </conflict>
    <text>Extended N-terminus.</text>
</comment>
<gene>
    <name type="primary">RANBP10</name>
    <name type="synonym">KIAA1464</name>
</gene>
<dbReference type="EMBL" id="AY337313">
    <property type="protein sequence ID" value="AAR01220.1"/>
    <property type="molecule type" value="mRNA"/>
</dbReference>
<dbReference type="EMBL" id="AB040897">
    <property type="protein sequence ID" value="BAA95988.1"/>
    <property type="status" value="ALT_INIT"/>
    <property type="molecule type" value="mRNA"/>
</dbReference>
<dbReference type="EMBL" id="AK295530">
    <property type="protein sequence ID" value="BAG58442.1"/>
    <property type="molecule type" value="mRNA"/>
</dbReference>
<dbReference type="EMBL" id="AK298806">
    <property type="protein sequence ID" value="BAG60941.1"/>
    <property type="molecule type" value="mRNA"/>
</dbReference>
<dbReference type="EMBL" id="AC010530">
    <property type="status" value="NOT_ANNOTATED_CDS"/>
    <property type="molecule type" value="Genomic_DNA"/>
</dbReference>
<dbReference type="EMBL" id="AC040162">
    <property type="status" value="NOT_ANNOTATED_CDS"/>
    <property type="molecule type" value="Genomic_DNA"/>
</dbReference>
<dbReference type="EMBL" id="BC099917">
    <property type="protein sequence ID" value="AAH99917.1"/>
    <property type="molecule type" value="mRNA"/>
</dbReference>
<dbReference type="EMBL" id="BC121176">
    <property type="protein sequence ID" value="AAI21177.1"/>
    <property type="molecule type" value="mRNA"/>
</dbReference>
<dbReference type="EMBL" id="BC121177">
    <property type="protein sequence ID" value="AAI21178.1"/>
    <property type="molecule type" value="mRNA"/>
</dbReference>
<dbReference type="CCDS" id="CCDS32469.1">
    <molecule id="Q6VN20-1"/>
</dbReference>
<dbReference type="CCDS" id="CCDS81999.1">
    <molecule id="Q6VN20-3"/>
</dbReference>
<dbReference type="RefSeq" id="NP_001307167.1">
    <molecule id="Q6VN20-2"/>
    <property type="nucleotide sequence ID" value="NM_001320238.2"/>
</dbReference>
<dbReference type="RefSeq" id="NP_001307168.1">
    <molecule id="Q6VN20-3"/>
    <property type="nucleotide sequence ID" value="NM_001320239.2"/>
</dbReference>
<dbReference type="RefSeq" id="NP_001307169.1">
    <property type="nucleotide sequence ID" value="NM_001320240.1"/>
</dbReference>
<dbReference type="RefSeq" id="NP_065901.1">
    <molecule id="Q6VN20-1"/>
    <property type="nucleotide sequence ID" value="NM_020850.3"/>
</dbReference>
<dbReference type="SMR" id="Q6VN20"/>
<dbReference type="BioGRID" id="121657">
    <property type="interactions" value="182"/>
</dbReference>
<dbReference type="ComplexPortal" id="CPX-7902">
    <property type="entry name" value="GID E3 ubiquitin ligase complex, RMND5A-RANBP10 variant"/>
</dbReference>
<dbReference type="ComplexPortal" id="CPX-7903">
    <property type="entry name" value="GID E3 ubiquitin ligase complex, RMND5B-RANBP10 variant"/>
</dbReference>
<dbReference type="CORUM" id="Q6VN20"/>
<dbReference type="FunCoup" id="Q6VN20">
    <property type="interactions" value="2085"/>
</dbReference>
<dbReference type="IntAct" id="Q6VN20">
    <property type="interactions" value="84"/>
</dbReference>
<dbReference type="MINT" id="Q6VN20"/>
<dbReference type="STRING" id="9606.ENSP00000316589"/>
<dbReference type="GlyGen" id="Q6VN20">
    <property type="glycosylation" value="3 sites, 1 N-linked glycan (1 site), 1 O-linked glycan (1 site)"/>
</dbReference>
<dbReference type="iPTMnet" id="Q6VN20"/>
<dbReference type="PhosphoSitePlus" id="Q6VN20"/>
<dbReference type="SwissPalm" id="Q6VN20"/>
<dbReference type="BioMuta" id="RANBP10"/>
<dbReference type="DMDM" id="74710336"/>
<dbReference type="CPTAC" id="CPTAC-1265"/>
<dbReference type="CPTAC" id="CPTAC-1266"/>
<dbReference type="jPOST" id="Q6VN20"/>
<dbReference type="MassIVE" id="Q6VN20"/>
<dbReference type="PaxDb" id="9606-ENSP00000316589"/>
<dbReference type="PeptideAtlas" id="Q6VN20"/>
<dbReference type="ProteomicsDB" id="4296"/>
<dbReference type="ProteomicsDB" id="4875"/>
<dbReference type="ProteomicsDB" id="67730">
    <molecule id="Q6VN20-1"/>
</dbReference>
<dbReference type="Pumba" id="Q6VN20"/>
<dbReference type="Antibodypedia" id="44334">
    <property type="antibodies" value="78 antibodies from 24 providers"/>
</dbReference>
<dbReference type="DNASU" id="57610"/>
<dbReference type="Ensembl" id="ENST00000317506.8">
    <molecule id="Q6VN20-1"/>
    <property type="protein sequence ID" value="ENSP00000316589.3"/>
    <property type="gene ID" value="ENSG00000141084.12"/>
</dbReference>
<dbReference type="Ensembl" id="ENST00000448631.6">
    <molecule id="Q6VN20-3"/>
    <property type="protein sequence ID" value="ENSP00000392808.2"/>
    <property type="gene ID" value="ENSG00000141084.12"/>
</dbReference>
<dbReference type="GeneID" id="57610"/>
<dbReference type="KEGG" id="hsa:57610"/>
<dbReference type="MANE-Select" id="ENST00000317506.8">
    <property type="protein sequence ID" value="ENSP00000316589.3"/>
    <property type="RefSeq nucleotide sequence ID" value="NM_020850.3"/>
    <property type="RefSeq protein sequence ID" value="NP_065901.1"/>
</dbReference>
<dbReference type="UCSC" id="uc002eud.4">
    <molecule id="Q6VN20-1"/>
    <property type="organism name" value="human"/>
</dbReference>
<dbReference type="AGR" id="HGNC:29285"/>
<dbReference type="CTD" id="57610"/>
<dbReference type="DisGeNET" id="57610"/>
<dbReference type="GeneCards" id="RANBP10"/>
<dbReference type="HGNC" id="HGNC:29285">
    <property type="gene designation" value="RANBP10"/>
</dbReference>
<dbReference type="HPA" id="ENSG00000141084">
    <property type="expression patterns" value="Low tissue specificity"/>
</dbReference>
<dbReference type="MIM" id="614031">
    <property type="type" value="gene"/>
</dbReference>
<dbReference type="neXtProt" id="NX_Q6VN20"/>
<dbReference type="OpenTargets" id="ENSG00000141084"/>
<dbReference type="PharmGKB" id="PA134929520"/>
<dbReference type="VEuPathDB" id="HostDB:ENSG00000141084"/>
<dbReference type="eggNOG" id="KOG1477">
    <property type="taxonomic scope" value="Eukaryota"/>
</dbReference>
<dbReference type="GeneTree" id="ENSGT00940000158257"/>
<dbReference type="HOGENOM" id="CLU_009129_4_0_1"/>
<dbReference type="InParanoid" id="Q6VN20"/>
<dbReference type="OrthoDB" id="25503at2759"/>
<dbReference type="PAN-GO" id="Q6VN20">
    <property type="GO annotations" value="3 GO annotations based on evolutionary models"/>
</dbReference>
<dbReference type="PhylomeDB" id="Q6VN20"/>
<dbReference type="TreeFam" id="TF331658"/>
<dbReference type="PathwayCommons" id="Q6VN20"/>
<dbReference type="Reactome" id="R-HSA-8851805">
    <property type="pathway name" value="MET activates RAS signaling"/>
</dbReference>
<dbReference type="SignaLink" id="Q6VN20"/>
<dbReference type="BioGRID-ORCS" id="57610">
    <property type="hits" value="17 hits in 1155 CRISPR screens"/>
</dbReference>
<dbReference type="ChiTaRS" id="RANBP10">
    <property type="organism name" value="human"/>
</dbReference>
<dbReference type="GenomeRNAi" id="57610"/>
<dbReference type="Pharos" id="Q6VN20">
    <property type="development level" value="Tbio"/>
</dbReference>
<dbReference type="PRO" id="PR:Q6VN20"/>
<dbReference type="Proteomes" id="UP000005640">
    <property type="component" value="Chromosome 16"/>
</dbReference>
<dbReference type="RNAct" id="Q6VN20">
    <property type="molecule type" value="protein"/>
</dbReference>
<dbReference type="Bgee" id="ENSG00000141084">
    <property type="expression patterns" value="Expressed in right uterine tube and 183 other cell types or tissues"/>
</dbReference>
<dbReference type="ExpressionAtlas" id="Q6VN20">
    <property type="expression patterns" value="baseline and differential"/>
</dbReference>
<dbReference type="GO" id="GO:0005737">
    <property type="term" value="C:cytoplasm"/>
    <property type="evidence" value="ECO:0000318"/>
    <property type="project" value="GO_Central"/>
</dbReference>
<dbReference type="GO" id="GO:0005829">
    <property type="term" value="C:cytosol"/>
    <property type="evidence" value="ECO:0000304"/>
    <property type="project" value="Reactome"/>
</dbReference>
<dbReference type="GO" id="GO:0015630">
    <property type="term" value="C:microtubule cytoskeleton"/>
    <property type="evidence" value="ECO:0007669"/>
    <property type="project" value="Ensembl"/>
</dbReference>
<dbReference type="GO" id="GO:0005634">
    <property type="term" value="C:nucleus"/>
    <property type="evidence" value="ECO:0007669"/>
    <property type="project" value="UniProtKB-SubCell"/>
</dbReference>
<dbReference type="GO" id="GO:0000151">
    <property type="term" value="C:ubiquitin ligase complex"/>
    <property type="evidence" value="ECO:0000314"/>
    <property type="project" value="UniProtKB"/>
</dbReference>
<dbReference type="GO" id="GO:0048487">
    <property type="term" value="F:beta-tubulin binding"/>
    <property type="evidence" value="ECO:0007669"/>
    <property type="project" value="Ensembl"/>
</dbReference>
<dbReference type="GO" id="GO:0005085">
    <property type="term" value="F:guanyl-nucleotide exchange factor activity"/>
    <property type="evidence" value="ECO:0007669"/>
    <property type="project" value="Ensembl"/>
</dbReference>
<dbReference type="GO" id="GO:0031267">
    <property type="term" value="F:small GTPase binding"/>
    <property type="evidence" value="ECO:0007669"/>
    <property type="project" value="Ensembl"/>
</dbReference>
<dbReference type="GO" id="GO:0007010">
    <property type="term" value="P:cytoskeleton organization"/>
    <property type="evidence" value="ECO:0000318"/>
    <property type="project" value="GO_Central"/>
</dbReference>
<dbReference type="GO" id="GO:0000226">
    <property type="term" value="P:microtubule cytoskeleton organization"/>
    <property type="evidence" value="ECO:0007669"/>
    <property type="project" value="Ensembl"/>
</dbReference>
<dbReference type="CDD" id="cd12909">
    <property type="entry name" value="SPRY_RanBP9_10"/>
    <property type="match status" value="1"/>
</dbReference>
<dbReference type="FunFam" id="2.60.120.920:FF:000011">
    <property type="entry name" value="RAN binding protein 10"/>
    <property type="match status" value="1"/>
</dbReference>
<dbReference type="Gene3D" id="2.60.120.920">
    <property type="match status" value="1"/>
</dbReference>
<dbReference type="InterPro" id="IPR001870">
    <property type="entry name" value="B30.2/SPRY"/>
</dbReference>
<dbReference type="InterPro" id="IPR043136">
    <property type="entry name" value="B30.2/SPRY_sf"/>
</dbReference>
<dbReference type="InterPro" id="IPR013320">
    <property type="entry name" value="ConA-like_dom_sf"/>
</dbReference>
<dbReference type="InterPro" id="IPR013144">
    <property type="entry name" value="CRA_dom"/>
</dbReference>
<dbReference type="InterPro" id="IPR024964">
    <property type="entry name" value="CTLH/CRA"/>
</dbReference>
<dbReference type="InterPro" id="IPR006595">
    <property type="entry name" value="CTLH_C"/>
</dbReference>
<dbReference type="InterPro" id="IPR006594">
    <property type="entry name" value="LisH"/>
</dbReference>
<dbReference type="InterPro" id="IPR003877">
    <property type="entry name" value="SPRY_dom"/>
</dbReference>
<dbReference type="InterPro" id="IPR035782">
    <property type="entry name" value="SPRY_RanBP9/10"/>
</dbReference>
<dbReference type="InterPro" id="IPR050618">
    <property type="entry name" value="Ubq-SigPath_Reg"/>
</dbReference>
<dbReference type="PANTHER" id="PTHR12864">
    <property type="entry name" value="RAN BINDING PROTEIN 9-RELATED"/>
    <property type="match status" value="1"/>
</dbReference>
<dbReference type="Pfam" id="PF10607">
    <property type="entry name" value="CTLH"/>
    <property type="match status" value="2"/>
</dbReference>
<dbReference type="Pfam" id="PF08513">
    <property type="entry name" value="LisH"/>
    <property type="match status" value="1"/>
</dbReference>
<dbReference type="Pfam" id="PF00622">
    <property type="entry name" value="SPRY"/>
    <property type="match status" value="1"/>
</dbReference>
<dbReference type="SMART" id="SM00757">
    <property type="entry name" value="CRA"/>
    <property type="match status" value="1"/>
</dbReference>
<dbReference type="SMART" id="SM00668">
    <property type="entry name" value="CTLH"/>
    <property type="match status" value="1"/>
</dbReference>
<dbReference type="SMART" id="SM00449">
    <property type="entry name" value="SPRY"/>
    <property type="match status" value="1"/>
</dbReference>
<dbReference type="SUPFAM" id="SSF49899">
    <property type="entry name" value="Concanavalin A-like lectins/glucanases"/>
    <property type="match status" value="1"/>
</dbReference>
<dbReference type="PROSITE" id="PS50188">
    <property type="entry name" value="B302_SPRY"/>
    <property type="match status" value="1"/>
</dbReference>
<dbReference type="PROSITE" id="PS50897">
    <property type="entry name" value="CTLH"/>
    <property type="match status" value="1"/>
</dbReference>
<dbReference type="PROSITE" id="PS50896">
    <property type="entry name" value="LISH"/>
    <property type="match status" value="1"/>
</dbReference>
<evidence type="ECO:0000250" key="1"/>
<evidence type="ECO:0000250" key="2">
    <source>
        <dbReference type="UniProtKB" id="Q6VN19"/>
    </source>
</evidence>
<evidence type="ECO:0000255" key="3">
    <source>
        <dbReference type="PROSITE-ProRule" id="PRU00058"/>
    </source>
</evidence>
<evidence type="ECO:0000255" key="4">
    <source>
        <dbReference type="PROSITE-ProRule" id="PRU00126"/>
    </source>
</evidence>
<evidence type="ECO:0000255" key="5">
    <source>
        <dbReference type="PROSITE-ProRule" id="PRU00548"/>
    </source>
</evidence>
<evidence type="ECO:0000256" key="6">
    <source>
        <dbReference type="SAM" id="MobiDB-lite"/>
    </source>
</evidence>
<evidence type="ECO:0000269" key="7">
    <source>
    </source>
</evidence>
<evidence type="ECO:0000269" key="8">
    <source>
    </source>
</evidence>
<evidence type="ECO:0000269" key="9">
    <source>
    </source>
</evidence>
<evidence type="ECO:0000269" key="10">
    <source>
    </source>
</evidence>
<evidence type="ECO:0000269" key="11">
    <source>
    </source>
</evidence>
<evidence type="ECO:0000303" key="12">
    <source>
    </source>
</evidence>
<evidence type="ECO:0000305" key="13"/>
<evidence type="ECO:0007744" key="14">
    <source>
    </source>
</evidence>
<evidence type="ECO:0007744" key="15">
    <source>
    </source>
</evidence>
<evidence type="ECO:0007744" key="16">
    <source>
    </source>
</evidence>
<evidence type="ECO:0007744" key="17">
    <source>
    </source>
</evidence>
<evidence type="ECO:0007744" key="18">
    <source>
    </source>
</evidence>
<evidence type="ECO:0007744" key="19">
    <source>
    </source>
</evidence>
<evidence type="ECO:0007744" key="20">
    <source>
    </source>
</evidence>
<reference key="1">
    <citation type="journal article" date="2004" name="Biochem. Biophys. Res. Commun.">
        <title>A novel MET-interacting protein shares high sequence similarity with RanBPM, but fails to stimulate MET-induced Ras/Erk signaling.</title>
        <authorList>
            <person name="Wang D."/>
            <person name="Li Z."/>
            <person name="Schoen S.R."/>
            <person name="Messing E.M."/>
            <person name="Wu G."/>
        </authorList>
    </citation>
    <scope>NUCLEOTIDE SEQUENCE [MRNA] (ISOFORM 1)</scope>
    <scope>TISSUE SPECIFICITY</scope>
    <scope>INTERACTION WITH RAN AND MET</scope>
</reference>
<reference key="2">
    <citation type="journal article" date="2000" name="DNA Res.">
        <title>Prediction of the coding sequences of unidentified human genes. XVII. The complete sequences of 100 new cDNA clones from brain which code for large proteins in vitro.</title>
        <authorList>
            <person name="Nagase T."/>
            <person name="Kikuno R."/>
            <person name="Ishikawa K."/>
            <person name="Hirosawa M."/>
            <person name="Ohara O."/>
        </authorList>
    </citation>
    <scope>NUCLEOTIDE SEQUENCE [LARGE SCALE MRNA] (ISOFORM 1)</scope>
    <source>
        <tissue>Brain</tissue>
    </source>
</reference>
<reference key="3">
    <citation type="journal article" date="2004" name="Nat. Genet.">
        <title>Complete sequencing and characterization of 21,243 full-length human cDNAs.</title>
        <authorList>
            <person name="Ota T."/>
            <person name="Suzuki Y."/>
            <person name="Nishikawa T."/>
            <person name="Otsuki T."/>
            <person name="Sugiyama T."/>
            <person name="Irie R."/>
            <person name="Wakamatsu A."/>
            <person name="Hayashi K."/>
            <person name="Sato H."/>
            <person name="Nagai K."/>
            <person name="Kimura K."/>
            <person name="Makita H."/>
            <person name="Sekine M."/>
            <person name="Obayashi M."/>
            <person name="Nishi T."/>
            <person name="Shibahara T."/>
            <person name="Tanaka T."/>
            <person name="Ishii S."/>
            <person name="Yamamoto J."/>
            <person name="Saito K."/>
            <person name="Kawai Y."/>
            <person name="Isono Y."/>
            <person name="Nakamura Y."/>
            <person name="Nagahari K."/>
            <person name="Murakami K."/>
            <person name="Yasuda T."/>
            <person name="Iwayanagi T."/>
            <person name="Wagatsuma M."/>
            <person name="Shiratori A."/>
            <person name="Sudo H."/>
            <person name="Hosoiri T."/>
            <person name="Kaku Y."/>
            <person name="Kodaira H."/>
            <person name="Kondo H."/>
            <person name="Sugawara M."/>
            <person name="Takahashi M."/>
            <person name="Kanda K."/>
            <person name="Yokoi T."/>
            <person name="Furuya T."/>
            <person name="Kikkawa E."/>
            <person name="Omura Y."/>
            <person name="Abe K."/>
            <person name="Kamihara K."/>
            <person name="Katsuta N."/>
            <person name="Sato K."/>
            <person name="Tanikawa M."/>
            <person name="Yamazaki M."/>
            <person name="Ninomiya K."/>
            <person name="Ishibashi T."/>
            <person name="Yamashita H."/>
            <person name="Murakawa K."/>
            <person name="Fujimori K."/>
            <person name="Tanai H."/>
            <person name="Kimata M."/>
            <person name="Watanabe M."/>
            <person name="Hiraoka S."/>
            <person name="Chiba Y."/>
            <person name="Ishida S."/>
            <person name="Ono Y."/>
            <person name="Takiguchi S."/>
            <person name="Watanabe S."/>
            <person name="Yosida M."/>
            <person name="Hotuta T."/>
            <person name="Kusano J."/>
            <person name="Kanehori K."/>
            <person name="Takahashi-Fujii A."/>
            <person name="Hara H."/>
            <person name="Tanase T.-O."/>
            <person name="Nomura Y."/>
            <person name="Togiya S."/>
            <person name="Komai F."/>
            <person name="Hara R."/>
            <person name="Takeuchi K."/>
            <person name="Arita M."/>
            <person name="Imose N."/>
            <person name="Musashino K."/>
            <person name="Yuuki H."/>
            <person name="Oshima A."/>
            <person name="Sasaki N."/>
            <person name="Aotsuka S."/>
            <person name="Yoshikawa Y."/>
            <person name="Matsunawa H."/>
            <person name="Ichihara T."/>
            <person name="Shiohata N."/>
            <person name="Sano S."/>
            <person name="Moriya S."/>
            <person name="Momiyama H."/>
            <person name="Satoh N."/>
            <person name="Takami S."/>
            <person name="Terashima Y."/>
            <person name="Suzuki O."/>
            <person name="Nakagawa S."/>
            <person name="Senoh A."/>
            <person name="Mizoguchi H."/>
            <person name="Goto Y."/>
            <person name="Shimizu F."/>
            <person name="Wakebe H."/>
            <person name="Hishigaki H."/>
            <person name="Watanabe T."/>
            <person name="Sugiyama A."/>
            <person name="Takemoto M."/>
            <person name="Kawakami B."/>
            <person name="Yamazaki M."/>
            <person name="Watanabe K."/>
            <person name="Kumagai A."/>
            <person name="Itakura S."/>
            <person name="Fukuzumi Y."/>
            <person name="Fujimori Y."/>
            <person name="Komiyama M."/>
            <person name="Tashiro H."/>
            <person name="Tanigami A."/>
            <person name="Fujiwara T."/>
            <person name="Ono T."/>
            <person name="Yamada K."/>
            <person name="Fujii Y."/>
            <person name="Ozaki K."/>
            <person name="Hirao M."/>
            <person name="Ohmori Y."/>
            <person name="Kawabata A."/>
            <person name="Hikiji T."/>
            <person name="Kobatake N."/>
            <person name="Inagaki H."/>
            <person name="Ikema Y."/>
            <person name="Okamoto S."/>
            <person name="Okitani R."/>
            <person name="Kawakami T."/>
            <person name="Noguchi S."/>
            <person name="Itoh T."/>
            <person name="Shigeta K."/>
            <person name="Senba T."/>
            <person name="Matsumura K."/>
            <person name="Nakajima Y."/>
            <person name="Mizuno T."/>
            <person name="Morinaga M."/>
            <person name="Sasaki M."/>
            <person name="Togashi T."/>
            <person name="Oyama M."/>
            <person name="Hata H."/>
            <person name="Watanabe M."/>
            <person name="Komatsu T."/>
            <person name="Mizushima-Sugano J."/>
            <person name="Satoh T."/>
            <person name="Shirai Y."/>
            <person name="Takahashi Y."/>
            <person name="Nakagawa K."/>
            <person name="Okumura K."/>
            <person name="Nagase T."/>
            <person name="Nomura N."/>
            <person name="Kikuchi H."/>
            <person name="Masuho Y."/>
            <person name="Yamashita R."/>
            <person name="Nakai K."/>
            <person name="Yada T."/>
            <person name="Nakamura Y."/>
            <person name="Ohara O."/>
            <person name="Isogai T."/>
            <person name="Sugano S."/>
        </authorList>
    </citation>
    <scope>NUCLEOTIDE SEQUENCE [LARGE SCALE MRNA] (ISOFORMS 2 AND 3)</scope>
    <source>
        <tissue>Hippocampus</tissue>
    </source>
</reference>
<reference key="4">
    <citation type="journal article" date="2004" name="Nature">
        <title>The sequence and analysis of duplication-rich human chromosome 16.</title>
        <authorList>
            <person name="Martin J."/>
            <person name="Han C."/>
            <person name="Gordon L.A."/>
            <person name="Terry A."/>
            <person name="Prabhakar S."/>
            <person name="She X."/>
            <person name="Xie G."/>
            <person name="Hellsten U."/>
            <person name="Chan Y.M."/>
            <person name="Altherr M."/>
            <person name="Couronne O."/>
            <person name="Aerts A."/>
            <person name="Bajorek E."/>
            <person name="Black S."/>
            <person name="Blumer H."/>
            <person name="Branscomb E."/>
            <person name="Brown N.C."/>
            <person name="Bruno W.J."/>
            <person name="Buckingham J.M."/>
            <person name="Callen D.F."/>
            <person name="Campbell C.S."/>
            <person name="Campbell M.L."/>
            <person name="Campbell E.W."/>
            <person name="Caoile C."/>
            <person name="Challacombe J.F."/>
            <person name="Chasteen L.A."/>
            <person name="Chertkov O."/>
            <person name="Chi H.C."/>
            <person name="Christensen M."/>
            <person name="Clark L.M."/>
            <person name="Cohn J.D."/>
            <person name="Denys M."/>
            <person name="Detter J.C."/>
            <person name="Dickson M."/>
            <person name="Dimitrijevic-Bussod M."/>
            <person name="Escobar J."/>
            <person name="Fawcett J.J."/>
            <person name="Flowers D."/>
            <person name="Fotopulos D."/>
            <person name="Glavina T."/>
            <person name="Gomez M."/>
            <person name="Gonzales E."/>
            <person name="Goodstein D."/>
            <person name="Goodwin L.A."/>
            <person name="Grady D.L."/>
            <person name="Grigoriev I."/>
            <person name="Groza M."/>
            <person name="Hammon N."/>
            <person name="Hawkins T."/>
            <person name="Haydu L."/>
            <person name="Hildebrand C.E."/>
            <person name="Huang W."/>
            <person name="Israni S."/>
            <person name="Jett J."/>
            <person name="Jewett P.B."/>
            <person name="Kadner K."/>
            <person name="Kimball H."/>
            <person name="Kobayashi A."/>
            <person name="Krawczyk M.-C."/>
            <person name="Leyba T."/>
            <person name="Longmire J.L."/>
            <person name="Lopez F."/>
            <person name="Lou Y."/>
            <person name="Lowry S."/>
            <person name="Ludeman T."/>
            <person name="Manohar C.F."/>
            <person name="Mark G.A."/>
            <person name="McMurray K.L."/>
            <person name="Meincke L.J."/>
            <person name="Morgan J."/>
            <person name="Moyzis R.K."/>
            <person name="Mundt M.O."/>
            <person name="Munk A.C."/>
            <person name="Nandkeshwar R.D."/>
            <person name="Pitluck S."/>
            <person name="Pollard M."/>
            <person name="Predki P."/>
            <person name="Parson-Quintana B."/>
            <person name="Ramirez L."/>
            <person name="Rash S."/>
            <person name="Retterer J."/>
            <person name="Ricke D.O."/>
            <person name="Robinson D.L."/>
            <person name="Rodriguez A."/>
            <person name="Salamov A."/>
            <person name="Saunders E.H."/>
            <person name="Scott D."/>
            <person name="Shough T."/>
            <person name="Stallings R.L."/>
            <person name="Stalvey M."/>
            <person name="Sutherland R.D."/>
            <person name="Tapia R."/>
            <person name="Tesmer J.G."/>
            <person name="Thayer N."/>
            <person name="Thompson L.S."/>
            <person name="Tice H."/>
            <person name="Torney D.C."/>
            <person name="Tran-Gyamfi M."/>
            <person name="Tsai M."/>
            <person name="Ulanovsky L.E."/>
            <person name="Ustaszewska A."/>
            <person name="Vo N."/>
            <person name="White P.S."/>
            <person name="Williams A.L."/>
            <person name="Wills P.L."/>
            <person name="Wu J.-R."/>
            <person name="Wu K."/>
            <person name="Yang J."/>
            <person name="DeJong P."/>
            <person name="Bruce D."/>
            <person name="Doggett N.A."/>
            <person name="Deaven L."/>
            <person name="Schmutz J."/>
            <person name="Grimwood J."/>
            <person name="Richardson P."/>
            <person name="Rokhsar D.S."/>
            <person name="Eichler E.E."/>
            <person name="Gilna P."/>
            <person name="Lucas S.M."/>
            <person name="Myers R.M."/>
            <person name="Rubin E.M."/>
            <person name="Pennacchio L.A."/>
        </authorList>
    </citation>
    <scope>NUCLEOTIDE SEQUENCE [LARGE SCALE GENOMIC DNA]</scope>
</reference>
<reference key="5">
    <citation type="journal article" date="2004" name="Genome Res.">
        <title>The status, quality, and expansion of the NIH full-length cDNA project: the Mammalian Gene Collection (MGC).</title>
        <authorList>
            <consortium name="The MGC Project Team"/>
        </authorList>
    </citation>
    <scope>NUCLEOTIDE SEQUENCE [LARGE SCALE MRNA] (ISOFORM 1)</scope>
    <source>
        <tissue>Placenta</tissue>
    </source>
</reference>
<reference key="6">
    <citation type="journal article" date="2008" name="Biochem. Biophys. Res. Commun.">
        <title>RanBP10 acts as a novel coactivator for the androgen receptor.</title>
        <authorList>
            <person name="Harada N."/>
            <person name="Yokoyama T."/>
            <person name="Yamaji R."/>
            <person name="Nakano Y."/>
            <person name="Inui H."/>
        </authorList>
    </citation>
    <scope>FUNCTION</scope>
    <scope>HOMODIMERIZATION</scope>
    <scope>INTERACTION WITH AR AND RANBP9</scope>
    <scope>SUBCELLULAR LOCATION</scope>
</reference>
<reference key="7">
    <citation type="journal article" date="2008" name="J. Biol. Chem.">
        <title>RanBP10 is a cytoplasmic guanine nucleotide exchange factor that modulates noncentrosomal microtubules.</title>
        <authorList>
            <person name="Schulze H."/>
            <person name="Dose M."/>
            <person name="Korpal M."/>
            <person name="Meyer I."/>
            <person name="Italiano J.E. Jr."/>
            <person name="Shivdasani R.A."/>
        </authorList>
    </citation>
    <scope>INTERACTION WITH TUBB1</scope>
</reference>
<reference key="8">
    <citation type="journal article" date="2008" name="Proc. Natl. Acad. Sci. U.S.A.">
        <title>A quantitative atlas of mitotic phosphorylation.</title>
        <authorList>
            <person name="Dephoure N."/>
            <person name="Zhou C."/>
            <person name="Villen J."/>
            <person name="Beausoleil S.A."/>
            <person name="Bakalarski C.E."/>
            <person name="Elledge S.J."/>
            <person name="Gygi S.P."/>
        </authorList>
    </citation>
    <scope>PHOSPHORYLATION [LARGE SCALE ANALYSIS] AT SER-365 AND SER-369</scope>
    <scope>IDENTIFICATION BY MASS SPECTROMETRY [LARGE SCALE ANALYSIS]</scope>
    <source>
        <tissue>Cervix carcinoma</tissue>
    </source>
</reference>
<reference key="9">
    <citation type="journal article" date="2009" name="Anal. Chem.">
        <title>Lys-N and trypsin cover complementary parts of the phosphoproteome in a refined SCX-based approach.</title>
        <authorList>
            <person name="Gauci S."/>
            <person name="Helbig A.O."/>
            <person name="Slijper M."/>
            <person name="Krijgsveld J."/>
            <person name="Heck A.J."/>
            <person name="Mohammed S."/>
        </authorList>
    </citation>
    <scope>ACETYLATION [LARGE SCALE ANALYSIS] AT ALA-2</scope>
    <scope>CLEAVAGE OF INITIATOR METHIONINE [LARGE SCALE ANALYSIS]</scope>
    <scope>IDENTIFICATION BY MASS SPECTROMETRY [LARGE SCALE ANALYSIS]</scope>
</reference>
<reference key="10">
    <citation type="journal article" date="2009" name="Sci. Signal.">
        <title>Quantitative phosphoproteomic analysis of T cell receptor signaling reveals system-wide modulation of protein-protein interactions.</title>
        <authorList>
            <person name="Mayya V."/>
            <person name="Lundgren D.H."/>
            <person name="Hwang S.-I."/>
            <person name="Rezaul K."/>
            <person name="Wu L."/>
            <person name="Eng J.K."/>
            <person name="Rodionov V."/>
            <person name="Han D.K."/>
        </authorList>
    </citation>
    <scope>PHOSPHORYLATION [LARGE SCALE ANALYSIS] AT SER-365 AND SER-369</scope>
    <scope>IDENTIFICATION BY MASS SPECTROMETRY [LARGE SCALE ANALYSIS]</scope>
    <source>
        <tissue>Leukemic T-cell</tissue>
    </source>
</reference>
<reference key="11">
    <citation type="journal article" date="2010" name="Genomics">
        <title>YPEL5 protein of the YPEL gene family is involved in the cell cycle progression by interacting with two distinct proteins RanBPM and RanBP10.</title>
        <authorList>
            <person name="Hosono K."/>
            <person name="Noda S."/>
            <person name="Shimizu A."/>
            <person name="Nakanishi N."/>
            <person name="Ohtsubo M."/>
            <person name="Shimizu N."/>
            <person name="Minoshima S."/>
        </authorList>
    </citation>
    <scope>INTERACTION WITH YPEL5</scope>
</reference>
<reference key="12">
    <citation type="journal article" date="2011" name="BMC Syst. Biol.">
        <title>Initial characterization of the human central proteome.</title>
        <authorList>
            <person name="Burkard T.R."/>
            <person name="Planyavsky M."/>
            <person name="Kaupe I."/>
            <person name="Breitwieser F.P."/>
            <person name="Buerckstuemmer T."/>
            <person name="Bennett K.L."/>
            <person name="Superti-Furga G."/>
            <person name="Colinge J."/>
        </authorList>
    </citation>
    <scope>IDENTIFICATION BY MASS SPECTROMETRY [LARGE SCALE ANALYSIS]</scope>
</reference>
<reference key="13">
    <citation type="journal article" date="2011" name="Sci. Signal.">
        <title>System-wide temporal characterization of the proteome and phosphoproteome of human embryonic stem cell differentiation.</title>
        <authorList>
            <person name="Rigbolt K.T."/>
            <person name="Prokhorova T.A."/>
            <person name="Akimov V."/>
            <person name="Henningsen J."/>
            <person name="Johansen P.T."/>
            <person name="Kratchmarova I."/>
            <person name="Kassem M."/>
            <person name="Mann M."/>
            <person name="Olsen J.V."/>
            <person name="Blagoev B."/>
        </authorList>
    </citation>
    <scope>PHOSPHORYLATION [LARGE SCALE ANALYSIS] AT SER-369</scope>
    <scope>IDENTIFICATION BY MASS SPECTROMETRY [LARGE SCALE ANALYSIS]</scope>
</reference>
<reference key="14">
    <citation type="journal article" date="2012" name="Proc. Natl. Acad. Sci. U.S.A.">
        <title>N-terminal acetylome analyses and functional insights of the N-terminal acetyltransferase NatB.</title>
        <authorList>
            <person name="Van Damme P."/>
            <person name="Lasa M."/>
            <person name="Polevoda B."/>
            <person name="Gazquez C."/>
            <person name="Elosegui-Artola A."/>
            <person name="Kim D.S."/>
            <person name="De Juan-Pardo E."/>
            <person name="Demeyer K."/>
            <person name="Hole K."/>
            <person name="Larrea E."/>
            <person name="Timmerman E."/>
            <person name="Prieto J."/>
            <person name="Arnesen T."/>
            <person name="Sherman F."/>
            <person name="Gevaert K."/>
            <person name="Aldabe R."/>
        </authorList>
    </citation>
    <scope>ACETYLATION [LARGE SCALE ANALYSIS] AT ALA-2</scope>
    <scope>CLEAVAGE OF INITIATOR METHIONINE [LARGE SCALE ANALYSIS]</scope>
    <scope>IDENTIFICATION BY MASS SPECTROMETRY [LARGE SCALE ANALYSIS]</scope>
</reference>
<reference key="15">
    <citation type="journal article" date="2013" name="J. Proteome Res.">
        <title>Toward a comprehensive characterization of a human cancer cell phosphoproteome.</title>
        <authorList>
            <person name="Zhou H."/>
            <person name="Di Palma S."/>
            <person name="Preisinger C."/>
            <person name="Peng M."/>
            <person name="Polat A.N."/>
            <person name="Heck A.J."/>
            <person name="Mohammed S."/>
        </authorList>
    </citation>
    <scope>PHOSPHORYLATION [LARGE SCALE ANALYSIS] AT SER-361; SER-365; SER-369 AND SER-422</scope>
    <scope>IDENTIFICATION BY MASS SPECTROMETRY [LARGE SCALE ANALYSIS]</scope>
    <source>
        <tissue>Cervix carcinoma</tissue>
        <tissue>Erythroleukemia</tissue>
    </source>
</reference>
<reference key="16">
    <citation type="journal article" date="2014" name="J. Proteomics">
        <title>An enzyme assisted RP-RPLC approach for in-depth analysis of human liver phosphoproteome.</title>
        <authorList>
            <person name="Bian Y."/>
            <person name="Song C."/>
            <person name="Cheng K."/>
            <person name="Dong M."/>
            <person name="Wang F."/>
            <person name="Huang J."/>
            <person name="Sun D."/>
            <person name="Wang L."/>
            <person name="Ye M."/>
            <person name="Zou H."/>
        </authorList>
    </citation>
    <scope>PHOSPHORYLATION [LARGE SCALE ANALYSIS] AT SER-369</scope>
    <scope>IDENTIFICATION BY MASS SPECTROMETRY [LARGE SCALE ANALYSIS]</scope>
    <source>
        <tissue>Liver</tissue>
    </source>
</reference>
<reference key="17">
    <citation type="journal article" date="2018" name="Elife">
        <title>The multi-subunit GID/CTLH E3 ligase promotes proliferation and targets the transcription factor Hbp1 for degradation.</title>
        <authorList>
            <person name="Lampert F."/>
            <person name="Stafa D."/>
            <person name="Goga A."/>
            <person name="Soste M.V."/>
            <person name="Gilberto S."/>
            <person name="Olieric N."/>
            <person name="Picotti P."/>
            <person name="Stoffel M."/>
            <person name="Peter M."/>
        </authorList>
    </citation>
    <scope>FUNCTION</scope>
    <scope>IDENTIFICATION IN THE CTLH COMPLEX</scope>
    <scope>IDENTIFICATION BY MASS SPECTROMETRY</scope>
    <scope>SUBCELLULAR LOCATION</scope>
</reference>
<accession>Q6VN20</accession>
<accession>A4FTY2</accession>
<accession>B4DID0</accession>
<accession>B4DQH9</accession>
<accession>E7EW27</accession>
<accession>Q9P264</accession>
<organism>
    <name type="scientific">Homo sapiens</name>
    <name type="common">Human</name>
    <dbReference type="NCBI Taxonomy" id="9606"/>
    <lineage>
        <taxon>Eukaryota</taxon>
        <taxon>Metazoa</taxon>
        <taxon>Chordata</taxon>
        <taxon>Craniata</taxon>
        <taxon>Vertebrata</taxon>
        <taxon>Euteleostomi</taxon>
        <taxon>Mammalia</taxon>
        <taxon>Eutheria</taxon>
        <taxon>Euarchontoglires</taxon>
        <taxon>Primates</taxon>
        <taxon>Haplorrhini</taxon>
        <taxon>Catarrhini</taxon>
        <taxon>Hominidae</taxon>
        <taxon>Homo</taxon>
    </lineage>
</organism>
<protein>
    <recommendedName>
        <fullName>Ran-binding protein 10</fullName>
        <shortName>RanBP10</shortName>
    </recommendedName>
</protein>
<keyword id="KW-0007">Acetylation</keyword>
<keyword id="KW-0025">Alternative splicing</keyword>
<keyword id="KW-0963">Cytoplasm</keyword>
<keyword id="KW-0539">Nucleus</keyword>
<keyword id="KW-0597">Phosphoprotein</keyword>
<keyword id="KW-1267">Proteomics identification</keyword>
<keyword id="KW-1185">Reference proteome</keyword>